<proteinExistence type="inferred from homology"/>
<sequence length="270" mass="30334">MDNKIVYVVSDSVGETADLVVRAAMGQFPFAPDIRRVPYVEDTGTLKEVISIAKSNQALICFTLVKPDMRQYLVTEAAKEGVEAYDIIGPLIDQIEEITGQVPRYEPGVVRRLDEEYFKKIEAIEFAVKYDDGRDARGILKADIVLIGISRTSKTPLSQYLAHNKRLKVANVPLVPEVDPPEELYQVAKEKCFGLKITPEKLNHIRKERLKSLGLSDGATYANINRIKEEIDHFENVVSKINCQVIDVSNKAIEETANIIVNAVQNQKMF</sequence>
<gene>
    <name type="ordered locus">BAA_4540</name>
</gene>
<keyword id="KW-0418">Kinase</keyword>
<keyword id="KW-0547">Nucleotide-binding</keyword>
<keyword id="KW-0723">Serine/threonine-protein kinase</keyword>
<keyword id="KW-0808">Transferase</keyword>
<feature type="chain" id="PRO_1000149698" description="Putative pyruvate, phosphate dikinase regulatory protein">
    <location>
        <begin position="1"/>
        <end position="270"/>
    </location>
</feature>
<feature type="binding site" evidence="1">
    <location>
        <begin position="148"/>
        <end position="155"/>
    </location>
    <ligand>
        <name>ADP</name>
        <dbReference type="ChEBI" id="CHEBI:456216"/>
    </ligand>
</feature>
<accession>C3P8K2</accession>
<dbReference type="EC" id="2.7.11.32" evidence="1"/>
<dbReference type="EC" id="2.7.4.27" evidence="1"/>
<dbReference type="EMBL" id="CP001598">
    <property type="protein sequence ID" value="ACQ48667.1"/>
    <property type="molecule type" value="Genomic_DNA"/>
</dbReference>
<dbReference type="RefSeq" id="WP_000368943.1">
    <property type="nucleotide sequence ID" value="NC_012659.1"/>
</dbReference>
<dbReference type="SMR" id="C3P8K2"/>
<dbReference type="KEGG" id="bai:BAA_4540"/>
<dbReference type="HOGENOM" id="CLU_046206_2_1_9"/>
<dbReference type="GO" id="GO:0043531">
    <property type="term" value="F:ADP binding"/>
    <property type="evidence" value="ECO:0007669"/>
    <property type="project" value="UniProtKB-UniRule"/>
</dbReference>
<dbReference type="GO" id="GO:0005524">
    <property type="term" value="F:ATP binding"/>
    <property type="evidence" value="ECO:0007669"/>
    <property type="project" value="InterPro"/>
</dbReference>
<dbReference type="GO" id="GO:0016776">
    <property type="term" value="F:phosphotransferase activity, phosphate group as acceptor"/>
    <property type="evidence" value="ECO:0007669"/>
    <property type="project" value="UniProtKB-UniRule"/>
</dbReference>
<dbReference type="GO" id="GO:0004674">
    <property type="term" value="F:protein serine/threonine kinase activity"/>
    <property type="evidence" value="ECO:0007669"/>
    <property type="project" value="UniProtKB-UniRule"/>
</dbReference>
<dbReference type="HAMAP" id="MF_00921">
    <property type="entry name" value="PDRP"/>
    <property type="match status" value="1"/>
</dbReference>
<dbReference type="InterPro" id="IPR005177">
    <property type="entry name" value="Kinase-pyrophosphorylase"/>
</dbReference>
<dbReference type="InterPro" id="IPR026565">
    <property type="entry name" value="PPDK_reg"/>
</dbReference>
<dbReference type="NCBIfam" id="NF003742">
    <property type="entry name" value="PRK05339.1"/>
    <property type="match status" value="1"/>
</dbReference>
<dbReference type="PANTHER" id="PTHR31756">
    <property type="entry name" value="PYRUVATE, PHOSPHATE DIKINASE REGULATORY PROTEIN 1, CHLOROPLASTIC"/>
    <property type="match status" value="1"/>
</dbReference>
<dbReference type="PANTHER" id="PTHR31756:SF3">
    <property type="entry name" value="PYRUVATE, PHOSPHATE DIKINASE REGULATORY PROTEIN 1, CHLOROPLASTIC"/>
    <property type="match status" value="1"/>
</dbReference>
<dbReference type="Pfam" id="PF03618">
    <property type="entry name" value="Kinase-PPPase"/>
    <property type="match status" value="1"/>
</dbReference>
<protein>
    <recommendedName>
        <fullName evidence="1">Putative pyruvate, phosphate dikinase regulatory protein</fullName>
        <shortName evidence="1">PPDK regulatory protein</shortName>
        <ecNumber evidence="1">2.7.11.32</ecNumber>
        <ecNumber evidence="1">2.7.4.27</ecNumber>
    </recommendedName>
</protein>
<comment type="function">
    <text evidence="1">Bifunctional serine/threonine kinase and phosphorylase involved in the regulation of the pyruvate, phosphate dikinase (PPDK) by catalyzing its phosphorylation/dephosphorylation.</text>
</comment>
<comment type="catalytic activity">
    <reaction evidence="1">
        <text>N(tele)-phospho-L-histidyl/L-threonyl-[pyruvate, phosphate dikinase] + ADP = N(tele)-phospho-L-histidyl/O-phospho-L-threonyl-[pyruvate, phosphate dikinase] + AMP + H(+)</text>
        <dbReference type="Rhea" id="RHEA:43692"/>
        <dbReference type="Rhea" id="RHEA-COMP:10650"/>
        <dbReference type="Rhea" id="RHEA-COMP:10651"/>
        <dbReference type="ChEBI" id="CHEBI:15378"/>
        <dbReference type="ChEBI" id="CHEBI:30013"/>
        <dbReference type="ChEBI" id="CHEBI:61977"/>
        <dbReference type="ChEBI" id="CHEBI:83586"/>
        <dbReference type="ChEBI" id="CHEBI:456215"/>
        <dbReference type="ChEBI" id="CHEBI:456216"/>
        <dbReference type="EC" id="2.7.11.32"/>
    </reaction>
</comment>
<comment type="catalytic activity">
    <reaction evidence="1">
        <text>N(tele)-phospho-L-histidyl/O-phospho-L-threonyl-[pyruvate, phosphate dikinase] + phosphate + H(+) = N(tele)-phospho-L-histidyl/L-threonyl-[pyruvate, phosphate dikinase] + diphosphate</text>
        <dbReference type="Rhea" id="RHEA:43696"/>
        <dbReference type="Rhea" id="RHEA-COMP:10650"/>
        <dbReference type="Rhea" id="RHEA-COMP:10651"/>
        <dbReference type="ChEBI" id="CHEBI:15378"/>
        <dbReference type="ChEBI" id="CHEBI:30013"/>
        <dbReference type="ChEBI" id="CHEBI:33019"/>
        <dbReference type="ChEBI" id="CHEBI:43474"/>
        <dbReference type="ChEBI" id="CHEBI:61977"/>
        <dbReference type="ChEBI" id="CHEBI:83586"/>
        <dbReference type="EC" id="2.7.4.27"/>
    </reaction>
</comment>
<comment type="similarity">
    <text evidence="1">Belongs to the pyruvate, phosphate/water dikinase regulatory protein family. PDRP subfamily.</text>
</comment>
<evidence type="ECO:0000255" key="1">
    <source>
        <dbReference type="HAMAP-Rule" id="MF_00921"/>
    </source>
</evidence>
<reference key="1">
    <citation type="submission" date="2009-04" db="EMBL/GenBank/DDBJ databases">
        <title>Genome sequence of Bacillus anthracis A0248.</title>
        <authorList>
            <person name="Dodson R.J."/>
            <person name="Munk A.C."/>
            <person name="Bruce D."/>
            <person name="Detter C."/>
            <person name="Tapia R."/>
            <person name="Sutton G."/>
            <person name="Sims D."/>
            <person name="Brettin T."/>
        </authorList>
    </citation>
    <scope>NUCLEOTIDE SEQUENCE [LARGE SCALE GENOMIC DNA]</scope>
    <source>
        <strain>A0248</strain>
    </source>
</reference>
<name>PDRP_BACAA</name>
<organism>
    <name type="scientific">Bacillus anthracis (strain A0248)</name>
    <dbReference type="NCBI Taxonomy" id="592021"/>
    <lineage>
        <taxon>Bacteria</taxon>
        <taxon>Bacillati</taxon>
        <taxon>Bacillota</taxon>
        <taxon>Bacilli</taxon>
        <taxon>Bacillales</taxon>
        <taxon>Bacillaceae</taxon>
        <taxon>Bacillus</taxon>
        <taxon>Bacillus cereus group</taxon>
    </lineage>
</organism>